<dbReference type="EC" id="4.1.99.22" evidence="1"/>
<dbReference type="EMBL" id="CP001063">
    <property type="protein sequence ID" value="ACD09628.1"/>
    <property type="molecule type" value="Genomic_DNA"/>
</dbReference>
<dbReference type="RefSeq" id="WP_012421596.1">
    <property type="nucleotide sequence ID" value="NC_010658.1"/>
</dbReference>
<dbReference type="SMR" id="B2TVE9"/>
<dbReference type="STRING" id="344609.SbBS512_E2571"/>
<dbReference type="KEGG" id="sbc:SbBS512_E2571"/>
<dbReference type="HOGENOM" id="CLU_009273_0_1_6"/>
<dbReference type="UniPathway" id="UPA00344"/>
<dbReference type="Proteomes" id="UP000001030">
    <property type="component" value="Chromosome"/>
</dbReference>
<dbReference type="GO" id="GO:0051539">
    <property type="term" value="F:4 iron, 4 sulfur cluster binding"/>
    <property type="evidence" value="ECO:0007669"/>
    <property type="project" value="UniProtKB-UniRule"/>
</dbReference>
<dbReference type="GO" id="GO:0061799">
    <property type="term" value="F:cyclic pyranopterin monophosphate synthase activity"/>
    <property type="evidence" value="ECO:0007669"/>
    <property type="project" value="TreeGrafter"/>
</dbReference>
<dbReference type="GO" id="GO:0061798">
    <property type="term" value="F:GTP 3',8'-cyclase activity"/>
    <property type="evidence" value="ECO:0007669"/>
    <property type="project" value="UniProtKB-UniRule"/>
</dbReference>
<dbReference type="GO" id="GO:0005525">
    <property type="term" value="F:GTP binding"/>
    <property type="evidence" value="ECO:0007669"/>
    <property type="project" value="UniProtKB-UniRule"/>
</dbReference>
<dbReference type="GO" id="GO:0046872">
    <property type="term" value="F:metal ion binding"/>
    <property type="evidence" value="ECO:0007669"/>
    <property type="project" value="UniProtKB-KW"/>
</dbReference>
<dbReference type="GO" id="GO:1904047">
    <property type="term" value="F:S-adenosyl-L-methionine binding"/>
    <property type="evidence" value="ECO:0007669"/>
    <property type="project" value="UniProtKB-UniRule"/>
</dbReference>
<dbReference type="GO" id="GO:0006777">
    <property type="term" value="P:Mo-molybdopterin cofactor biosynthetic process"/>
    <property type="evidence" value="ECO:0007669"/>
    <property type="project" value="UniProtKB-UniRule"/>
</dbReference>
<dbReference type="CDD" id="cd01335">
    <property type="entry name" value="Radical_SAM"/>
    <property type="match status" value="1"/>
</dbReference>
<dbReference type="CDD" id="cd21117">
    <property type="entry name" value="Twitch_MoaA"/>
    <property type="match status" value="1"/>
</dbReference>
<dbReference type="FunFam" id="3.20.20.70:FF:000057">
    <property type="entry name" value="GTP 3',8-cyclase"/>
    <property type="match status" value="1"/>
</dbReference>
<dbReference type="Gene3D" id="3.20.20.70">
    <property type="entry name" value="Aldolase class I"/>
    <property type="match status" value="1"/>
</dbReference>
<dbReference type="HAMAP" id="MF_01225_B">
    <property type="entry name" value="MoaA_B"/>
    <property type="match status" value="1"/>
</dbReference>
<dbReference type="InterPro" id="IPR013785">
    <property type="entry name" value="Aldolase_TIM"/>
</dbReference>
<dbReference type="InterPro" id="IPR006638">
    <property type="entry name" value="Elp3/MiaA/NifB-like_rSAM"/>
</dbReference>
<dbReference type="InterPro" id="IPR013483">
    <property type="entry name" value="MoaA"/>
</dbReference>
<dbReference type="InterPro" id="IPR000385">
    <property type="entry name" value="MoaA_NifB_PqqE_Fe-S-bd_CS"/>
</dbReference>
<dbReference type="InterPro" id="IPR010505">
    <property type="entry name" value="MoaA_twitch"/>
</dbReference>
<dbReference type="InterPro" id="IPR050105">
    <property type="entry name" value="MoCo_biosynth_MoaA/MoaC"/>
</dbReference>
<dbReference type="InterPro" id="IPR007197">
    <property type="entry name" value="rSAM"/>
</dbReference>
<dbReference type="NCBIfam" id="TIGR02666">
    <property type="entry name" value="moaA"/>
    <property type="match status" value="1"/>
</dbReference>
<dbReference type="PANTHER" id="PTHR22960:SF28">
    <property type="entry name" value="GTP 3',8-CYCLASE"/>
    <property type="match status" value="1"/>
</dbReference>
<dbReference type="PANTHER" id="PTHR22960">
    <property type="entry name" value="MOLYBDOPTERIN COFACTOR SYNTHESIS PROTEIN A"/>
    <property type="match status" value="1"/>
</dbReference>
<dbReference type="Pfam" id="PF13353">
    <property type="entry name" value="Fer4_12"/>
    <property type="match status" value="1"/>
</dbReference>
<dbReference type="Pfam" id="PF06463">
    <property type="entry name" value="Mob_synth_C"/>
    <property type="match status" value="1"/>
</dbReference>
<dbReference type="Pfam" id="PF04055">
    <property type="entry name" value="Radical_SAM"/>
    <property type="match status" value="1"/>
</dbReference>
<dbReference type="SFLD" id="SFLDG01383">
    <property type="entry name" value="cyclic_pyranopterin_phosphate"/>
    <property type="match status" value="1"/>
</dbReference>
<dbReference type="SFLD" id="SFLDG01072">
    <property type="entry name" value="dehydrogenase_like"/>
    <property type="match status" value="1"/>
</dbReference>
<dbReference type="SMART" id="SM00729">
    <property type="entry name" value="Elp3"/>
    <property type="match status" value="1"/>
</dbReference>
<dbReference type="SUPFAM" id="SSF102114">
    <property type="entry name" value="Radical SAM enzymes"/>
    <property type="match status" value="1"/>
</dbReference>
<dbReference type="PROSITE" id="PS01305">
    <property type="entry name" value="MOAA_NIFB_PQQE"/>
    <property type="match status" value="1"/>
</dbReference>
<dbReference type="PROSITE" id="PS51918">
    <property type="entry name" value="RADICAL_SAM"/>
    <property type="match status" value="1"/>
</dbReference>
<keyword id="KW-0004">4Fe-4S</keyword>
<keyword id="KW-0342">GTP-binding</keyword>
<keyword id="KW-0408">Iron</keyword>
<keyword id="KW-0411">Iron-sulfur</keyword>
<keyword id="KW-0456">Lyase</keyword>
<keyword id="KW-0479">Metal-binding</keyword>
<keyword id="KW-0501">Molybdenum cofactor biosynthesis</keyword>
<keyword id="KW-0547">Nucleotide-binding</keyword>
<keyword id="KW-1185">Reference proteome</keyword>
<keyword id="KW-0949">S-adenosyl-L-methionine</keyword>
<name>MOAA_SHIB3</name>
<reference key="1">
    <citation type="submission" date="2008-05" db="EMBL/GenBank/DDBJ databases">
        <title>Complete sequence of Shigella boydii serotype 18 strain BS512.</title>
        <authorList>
            <person name="Rasko D.A."/>
            <person name="Rosovitz M."/>
            <person name="Maurelli A.T."/>
            <person name="Myers G."/>
            <person name="Seshadri R."/>
            <person name="Cer R."/>
            <person name="Jiang L."/>
            <person name="Ravel J."/>
            <person name="Sebastian Y."/>
        </authorList>
    </citation>
    <scope>NUCLEOTIDE SEQUENCE [LARGE SCALE GENOMIC DNA]</scope>
    <source>
        <strain>CDC 3083-94 / BS512</strain>
    </source>
</reference>
<comment type="function">
    <text evidence="1">Catalyzes the cyclization of GTP to (8S)-3',8-cyclo-7,8-dihydroguanosine 5'-triphosphate.</text>
</comment>
<comment type="catalytic activity">
    <reaction evidence="1">
        <text>GTP + AH2 + S-adenosyl-L-methionine = (8S)-3',8-cyclo-7,8-dihydroguanosine 5'-triphosphate + 5'-deoxyadenosine + L-methionine + A + H(+)</text>
        <dbReference type="Rhea" id="RHEA:49576"/>
        <dbReference type="ChEBI" id="CHEBI:13193"/>
        <dbReference type="ChEBI" id="CHEBI:15378"/>
        <dbReference type="ChEBI" id="CHEBI:17319"/>
        <dbReference type="ChEBI" id="CHEBI:17499"/>
        <dbReference type="ChEBI" id="CHEBI:37565"/>
        <dbReference type="ChEBI" id="CHEBI:57844"/>
        <dbReference type="ChEBI" id="CHEBI:59789"/>
        <dbReference type="ChEBI" id="CHEBI:131766"/>
        <dbReference type="EC" id="4.1.99.22"/>
    </reaction>
</comment>
<comment type="cofactor">
    <cofactor evidence="1">
        <name>[4Fe-4S] cluster</name>
        <dbReference type="ChEBI" id="CHEBI:49883"/>
    </cofactor>
    <text evidence="1">Binds 2 [4Fe-4S] clusters. Binds 1 [4Fe-4S] cluster coordinated with 3 cysteines and an exchangeable S-adenosyl-L-methionine and 1 [4Fe-4S] cluster coordinated with 3 cysteines and the GTP-derived substrate.</text>
</comment>
<comment type="pathway">
    <text evidence="1">Cofactor biosynthesis; molybdopterin biosynthesis.</text>
</comment>
<comment type="subunit">
    <text evidence="1">Monomer and homodimer.</text>
</comment>
<comment type="similarity">
    <text evidence="1">Belongs to the radical SAM superfamily. MoaA family.</text>
</comment>
<gene>
    <name evidence="1" type="primary">moaA</name>
    <name type="ordered locus">SbBS512_E2571</name>
</gene>
<proteinExistence type="inferred from homology"/>
<sequence length="329" mass="37358">MASQLTDAFARKFYYLRLSITDVCNFRCTYCLPDGYKPSGVTNKGFLTVDEIRRVTRAFASLGTEKVRLTGGEPSLRRDFTDIIAAVRENDAIRQIAVTTNGYRLERDVANWRDAGLTGINVSVDSLDARQFHAITGQDKFNQVMAGIDAAFEAGFEKVKVNTVLMRDVNHHQLDTFLNWIQHRPIQLRFIELMETGEGSELFRKHHISGQVLRDELLRRGWIHQLRQRSDGPAQVFCHPDYAGEIGLIMPYEKDFCATCNRLRVSSIGKLYLCLFGEGGVNLRDLLEDDTQQQALEARISVALREKKQTHFLHQNNTGITQNLSYIGG</sequence>
<organism>
    <name type="scientific">Shigella boydii serotype 18 (strain CDC 3083-94 / BS512)</name>
    <dbReference type="NCBI Taxonomy" id="344609"/>
    <lineage>
        <taxon>Bacteria</taxon>
        <taxon>Pseudomonadati</taxon>
        <taxon>Pseudomonadota</taxon>
        <taxon>Gammaproteobacteria</taxon>
        <taxon>Enterobacterales</taxon>
        <taxon>Enterobacteriaceae</taxon>
        <taxon>Shigella</taxon>
    </lineage>
</organism>
<accession>B2TVE9</accession>
<protein>
    <recommendedName>
        <fullName evidence="1">GTP 3',8-cyclase</fullName>
        <ecNumber evidence="1">4.1.99.22</ecNumber>
    </recommendedName>
    <alternativeName>
        <fullName evidence="1">Molybdenum cofactor biosynthesis protein A</fullName>
    </alternativeName>
</protein>
<evidence type="ECO:0000255" key="1">
    <source>
        <dbReference type="HAMAP-Rule" id="MF_01225"/>
    </source>
</evidence>
<evidence type="ECO:0000255" key="2">
    <source>
        <dbReference type="PROSITE-ProRule" id="PRU01266"/>
    </source>
</evidence>
<feature type="chain" id="PRO_1000139347" description="GTP 3',8-cyclase">
    <location>
        <begin position="1"/>
        <end position="329"/>
    </location>
</feature>
<feature type="domain" description="Radical SAM core" evidence="2">
    <location>
        <begin position="8"/>
        <end position="234"/>
    </location>
</feature>
<feature type="binding site" evidence="1">
    <location>
        <position position="17"/>
    </location>
    <ligand>
        <name>GTP</name>
        <dbReference type="ChEBI" id="CHEBI:37565"/>
    </ligand>
</feature>
<feature type="binding site" evidence="1">
    <location>
        <position position="24"/>
    </location>
    <ligand>
        <name>[4Fe-4S] cluster</name>
        <dbReference type="ChEBI" id="CHEBI:49883"/>
        <label>1</label>
        <note>4Fe-4S-S-AdoMet</note>
    </ligand>
</feature>
<feature type="binding site" evidence="1">
    <location>
        <position position="28"/>
    </location>
    <ligand>
        <name>[4Fe-4S] cluster</name>
        <dbReference type="ChEBI" id="CHEBI:49883"/>
        <label>1</label>
        <note>4Fe-4S-S-AdoMet</note>
    </ligand>
</feature>
<feature type="binding site" evidence="1">
    <location>
        <position position="30"/>
    </location>
    <ligand>
        <name>S-adenosyl-L-methionine</name>
        <dbReference type="ChEBI" id="CHEBI:59789"/>
    </ligand>
</feature>
<feature type="binding site" evidence="1">
    <location>
        <position position="31"/>
    </location>
    <ligand>
        <name>[4Fe-4S] cluster</name>
        <dbReference type="ChEBI" id="CHEBI:49883"/>
        <label>1</label>
        <note>4Fe-4S-S-AdoMet</note>
    </ligand>
</feature>
<feature type="binding site" evidence="1">
    <location>
        <position position="68"/>
    </location>
    <ligand>
        <name>GTP</name>
        <dbReference type="ChEBI" id="CHEBI:37565"/>
    </ligand>
</feature>
<feature type="binding site" evidence="1">
    <location>
        <position position="72"/>
    </location>
    <ligand>
        <name>S-adenosyl-L-methionine</name>
        <dbReference type="ChEBI" id="CHEBI:59789"/>
    </ligand>
</feature>
<feature type="binding site" evidence="1">
    <location>
        <position position="99"/>
    </location>
    <ligand>
        <name>GTP</name>
        <dbReference type="ChEBI" id="CHEBI:37565"/>
    </ligand>
</feature>
<feature type="binding site" evidence="1">
    <location>
        <position position="123"/>
    </location>
    <ligand>
        <name>S-adenosyl-L-methionine</name>
        <dbReference type="ChEBI" id="CHEBI:59789"/>
    </ligand>
</feature>
<feature type="binding site" evidence="1">
    <location>
        <position position="160"/>
    </location>
    <ligand>
        <name>GTP</name>
        <dbReference type="ChEBI" id="CHEBI:37565"/>
    </ligand>
</feature>
<feature type="binding site" evidence="1">
    <location>
        <position position="194"/>
    </location>
    <ligand>
        <name>S-adenosyl-L-methionine</name>
        <dbReference type="ChEBI" id="CHEBI:59789"/>
    </ligand>
</feature>
<feature type="binding site" evidence="1">
    <location>
        <position position="257"/>
    </location>
    <ligand>
        <name>[4Fe-4S] cluster</name>
        <dbReference type="ChEBI" id="CHEBI:49883"/>
        <label>2</label>
        <note>4Fe-4S-substrate</note>
    </ligand>
</feature>
<feature type="binding site" evidence="1">
    <location>
        <position position="260"/>
    </location>
    <ligand>
        <name>[4Fe-4S] cluster</name>
        <dbReference type="ChEBI" id="CHEBI:49883"/>
        <label>2</label>
        <note>4Fe-4S-substrate</note>
    </ligand>
</feature>
<feature type="binding site" evidence="1">
    <location>
        <begin position="262"/>
        <end position="264"/>
    </location>
    <ligand>
        <name>GTP</name>
        <dbReference type="ChEBI" id="CHEBI:37565"/>
    </ligand>
</feature>
<feature type="binding site" evidence="1">
    <location>
        <position position="274"/>
    </location>
    <ligand>
        <name>[4Fe-4S] cluster</name>
        <dbReference type="ChEBI" id="CHEBI:49883"/>
        <label>2</label>
        <note>4Fe-4S-substrate</note>
    </ligand>
</feature>